<organism>
    <name type="scientific">Pseudoalteromonas translucida (strain TAC 125)</name>
    <dbReference type="NCBI Taxonomy" id="326442"/>
    <lineage>
        <taxon>Bacteria</taxon>
        <taxon>Pseudomonadati</taxon>
        <taxon>Pseudomonadota</taxon>
        <taxon>Gammaproteobacteria</taxon>
        <taxon>Alteromonadales</taxon>
        <taxon>Pseudoalteromonadaceae</taxon>
        <taxon>Pseudoalteromonas</taxon>
    </lineage>
</organism>
<dbReference type="EMBL" id="CR954246">
    <property type="protein sequence ID" value="CAI86277.1"/>
    <property type="molecule type" value="Genomic_DNA"/>
</dbReference>
<dbReference type="SMR" id="Q3IKN3"/>
<dbReference type="STRING" id="326442.PSHAa1202"/>
<dbReference type="KEGG" id="pha:PSHAa1202"/>
<dbReference type="eggNOG" id="COG0718">
    <property type="taxonomic scope" value="Bacteria"/>
</dbReference>
<dbReference type="HOGENOM" id="CLU_140930_0_0_6"/>
<dbReference type="BioCyc" id="PHAL326442:PSHA_RS05935-MONOMER"/>
<dbReference type="Proteomes" id="UP000006843">
    <property type="component" value="Chromosome I"/>
</dbReference>
<dbReference type="GO" id="GO:0043590">
    <property type="term" value="C:bacterial nucleoid"/>
    <property type="evidence" value="ECO:0007669"/>
    <property type="project" value="UniProtKB-UniRule"/>
</dbReference>
<dbReference type="GO" id="GO:0005829">
    <property type="term" value="C:cytosol"/>
    <property type="evidence" value="ECO:0007669"/>
    <property type="project" value="TreeGrafter"/>
</dbReference>
<dbReference type="GO" id="GO:0003677">
    <property type="term" value="F:DNA binding"/>
    <property type="evidence" value="ECO:0007669"/>
    <property type="project" value="UniProtKB-UniRule"/>
</dbReference>
<dbReference type="FunFam" id="3.30.1310.10:FF:000001">
    <property type="entry name" value="Nucleoid-associated protein YbaB"/>
    <property type="match status" value="1"/>
</dbReference>
<dbReference type="Gene3D" id="3.30.1310.10">
    <property type="entry name" value="Nucleoid-associated protein YbaB-like domain"/>
    <property type="match status" value="1"/>
</dbReference>
<dbReference type="HAMAP" id="MF_00274">
    <property type="entry name" value="DNA_YbaB_EbfC"/>
    <property type="match status" value="1"/>
</dbReference>
<dbReference type="InterPro" id="IPR036894">
    <property type="entry name" value="YbaB-like_sf"/>
</dbReference>
<dbReference type="InterPro" id="IPR004401">
    <property type="entry name" value="YbaB/EbfC"/>
</dbReference>
<dbReference type="NCBIfam" id="TIGR00103">
    <property type="entry name" value="DNA_YbaB_EbfC"/>
    <property type="match status" value="1"/>
</dbReference>
<dbReference type="PANTHER" id="PTHR33449">
    <property type="entry name" value="NUCLEOID-ASSOCIATED PROTEIN YBAB"/>
    <property type="match status" value="1"/>
</dbReference>
<dbReference type="PANTHER" id="PTHR33449:SF1">
    <property type="entry name" value="NUCLEOID-ASSOCIATED PROTEIN YBAB"/>
    <property type="match status" value="1"/>
</dbReference>
<dbReference type="Pfam" id="PF02575">
    <property type="entry name" value="YbaB_DNA_bd"/>
    <property type="match status" value="1"/>
</dbReference>
<dbReference type="PIRSF" id="PIRSF004555">
    <property type="entry name" value="UCP004555"/>
    <property type="match status" value="1"/>
</dbReference>
<dbReference type="SUPFAM" id="SSF82607">
    <property type="entry name" value="YbaB-like"/>
    <property type="match status" value="1"/>
</dbReference>
<protein>
    <recommendedName>
        <fullName evidence="1">Nucleoid-associated protein PSHAa1202</fullName>
    </recommendedName>
</protein>
<reference key="1">
    <citation type="journal article" date="2005" name="Genome Res.">
        <title>Coping with cold: the genome of the versatile marine Antarctica bacterium Pseudoalteromonas haloplanktis TAC125.</title>
        <authorList>
            <person name="Medigue C."/>
            <person name="Krin E."/>
            <person name="Pascal G."/>
            <person name="Barbe V."/>
            <person name="Bernsel A."/>
            <person name="Bertin P.N."/>
            <person name="Cheung F."/>
            <person name="Cruveiller S."/>
            <person name="D'Amico S."/>
            <person name="Duilio A."/>
            <person name="Fang G."/>
            <person name="Feller G."/>
            <person name="Ho C."/>
            <person name="Mangenot S."/>
            <person name="Marino G."/>
            <person name="Nilsson J."/>
            <person name="Parrilli E."/>
            <person name="Rocha E.P.C."/>
            <person name="Rouy Z."/>
            <person name="Sekowska A."/>
            <person name="Tutino M.L."/>
            <person name="Vallenet D."/>
            <person name="von Heijne G."/>
            <person name="Danchin A."/>
        </authorList>
    </citation>
    <scope>NUCLEOTIDE SEQUENCE [LARGE SCALE GENOMIC DNA]</scope>
    <source>
        <strain>TAC 125</strain>
    </source>
</reference>
<accession>Q3IKN3</accession>
<feature type="chain" id="PRO_1000078766" description="Nucleoid-associated protein PSHAa1202">
    <location>
        <begin position="1"/>
        <end position="108"/>
    </location>
</feature>
<feature type="region of interest" description="Disordered" evidence="2">
    <location>
        <begin position="1"/>
        <end position="20"/>
    </location>
</feature>
<feature type="region of interest" description="Disordered" evidence="2">
    <location>
        <begin position="87"/>
        <end position="108"/>
    </location>
</feature>
<evidence type="ECO:0000255" key="1">
    <source>
        <dbReference type="HAMAP-Rule" id="MF_00274"/>
    </source>
</evidence>
<evidence type="ECO:0000256" key="2">
    <source>
        <dbReference type="SAM" id="MobiDB-lite"/>
    </source>
</evidence>
<proteinExistence type="inferred from homology"/>
<gene>
    <name type="ordered locus">PSHAa1202</name>
</gene>
<comment type="function">
    <text evidence="1">Binds to DNA and alters its conformation. May be involved in regulation of gene expression, nucleoid organization and DNA protection.</text>
</comment>
<comment type="subunit">
    <text evidence="1">Homodimer.</text>
</comment>
<comment type="subcellular location">
    <subcellularLocation>
        <location evidence="1">Cytoplasm</location>
        <location evidence="1">Nucleoid</location>
    </subcellularLocation>
</comment>
<comment type="similarity">
    <text evidence="1">Belongs to the YbaB/EbfC family.</text>
</comment>
<sequence>MFKGGMGNMMKQAQQMQDRMQKAQDEIATLEVVGEAGAGLVKVTMLGNHNVRRVELDESLMQDDKDMIEDLLAAACNDAVRRVADETQERMGKVTGGMQLPPGMKMPF</sequence>
<keyword id="KW-0963">Cytoplasm</keyword>
<keyword id="KW-0238">DNA-binding</keyword>
<keyword id="KW-1185">Reference proteome</keyword>
<name>Y1202_PSET1</name>